<keyword id="KW-0963">Cytoplasm</keyword>
<keyword id="KW-0210">Decarboxylase</keyword>
<keyword id="KW-0456">Lyase</keyword>
<keyword id="KW-0627">Porphyrin biosynthesis</keyword>
<evidence type="ECO:0000255" key="1">
    <source>
        <dbReference type="HAMAP-Rule" id="MF_00218"/>
    </source>
</evidence>
<proteinExistence type="inferred from homology"/>
<sequence length="355" mass="38822">MTALKNDRFLRALLKQPVDVTPVWMMRQAGRYLPEYRATRAKAGDFMSLCMNPELACEVTLQPLDRYPQLDAAILFSDILTIPDAMGQGLYFETGEGPRFRKVVSSLADIEALPVPDPEQDLGYVMDAVRTIRRELNGRVPLIGFSGSPWTLATYMVEGGSSKDFRKSKAMLYDNPQAMHALLDKLAQSVTSYLNGQIHAGAQAVQIFDSWGGSLSAAAYQEFSLTYMRKIVDGLIREHDGRRVPVILFTKGGGLWLESMAEVGAEALGLDWTCDIGSARARVGERVALQGNMDPSVLYANPAAIRAEVARILAAYGKGTGHVFNLGHGITPEVDPAHAGAFFEAVHELSAQYHG</sequence>
<reference key="1">
    <citation type="journal article" date="2009" name="Genome Res.">
        <title>Newly introduced genomic prophage islands are critical determinants of in vivo competitiveness in the Liverpool epidemic strain of Pseudomonas aeruginosa.</title>
        <authorList>
            <person name="Winstanley C."/>
            <person name="Langille M.G.I."/>
            <person name="Fothergill J.L."/>
            <person name="Kukavica-Ibrulj I."/>
            <person name="Paradis-Bleau C."/>
            <person name="Sanschagrin F."/>
            <person name="Thomson N.R."/>
            <person name="Winsor G.L."/>
            <person name="Quail M.A."/>
            <person name="Lennard N."/>
            <person name="Bignell A."/>
            <person name="Clarke L."/>
            <person name="Seeger K."/>
            <person name="Saunders D."/>
            <person name="Harris D."/>
            <person name="Parkhill J."/>
            <person name="Hancock R.E.W."/>
            <person name="Brinkman F.S.L."/>
            <person name="Levesque R.C."/>
        </authorList>
    </citation>
    <scope>NUCLEOTIDE SEQUENCE [LARGE SCALE GENOMIC DNA]</scope>
    <source>
        <strain>LESB58</strain>
    </source>
</reference>
<dbReference type="EC" id="4.1.1.37" evidence="1"/>
<dbReference type="EMBL" id="FM209186">
    <property type="protein sequence ID" value="CAW30178.1"/>
    <property type="molecule type" value="Genomic_DNA"/>
</dbReference>
<dbReference type="RefSeq" id="WP_003103698.1">
    <property type="nucleotide sequence ID" value="NC_011770.1"/>
</dbReference>
<dbReference type="SMR" id="B7V3C7"/>
<dbReference type="KEGG" id="pag:PLES_54241"/>
<dbReference type="HOGENOM" id="CLU_040933_0_0_6"/>
<dbReference type="UniPathway" id="UPA00251">
    <property type="reaction ID" value="UER00321"/>
</dbReference>
<dbReference type="GO" id="GO:0005829">
    <property type="term" value="C:cytosol"/>
    <property type="evidence" value="ECO:0007669"/>
    <property type="project" value="TreeGrafter"/>
</dbReference>
<dbReference type="GO" id="GO:0004853">
    <property type="term" value="F:uroporphyrinogen decarboxylase activity"/>
    <property type="evidence" value="ECO:0007669"/>
    <property type="project" value="UniProtKB-UniRule"/>
</dbReference>
<dbReference type="GO" id="GO:0019353">
    <property type="term" value="P:protoporphyrinogen IX biosynthetic process from glutamate"/>
    <property type="evidence" value="ECO:0007669"/>
    <property type="project" value="TreeGrafter"/>
</dbReference>
<dbReference type="CDD" id="cd00717">
    <property type="entry name" value="URO-D"/>
    <property type="match status" value="1"/>
</dbReference>
<dbReference type="FunFam" id="3.20.20.210:FF:000001">
    <property type="entry name" value="Uroporphyrinogen decarboxylase"/>
    <property type="match status" value="1"/>
</dbReference>
<dbReference type="Gene3D" id="3.20.20.210">
    <property type="match status" value="1"/>
</dbReference>
<dbReference type="HAMAP" id="MF_00218">
    <property type="entry name" value="URO_D"/>
    <property type="match status" value="1"/>
</dbReference>
<dbReference type="InterPro" id="IPR038071">
    <property type="entry name" value="UROD/MetE-like_sf"/>
</dbReference>
<dbReference type="InterPro" id="IPR006361">
    <property type="entry name" value="Uroporphyrinogen_deCO2ase_HemE"/>
</dbReference>
<dbReference type="InterPro" id="IPR000257">
    <property type="entry name" value="Uroporphyrinogen_deCOase"/>
</dbReference>
<dbReference type="NCBIfam" id="TIGR01464">
    <property type="entry name" value="hemE"/>
    <property type="match status" value="1"/>
</dbReference>
<dbReference type="PANTHER" id="PTHR21091">
    <property type="entry name" value="METHYLTETRAHYDROFOLATE:HOMOCYSTEINE METHYLTRANSFERASE RELATED"/>
    <property type="match status" value="1"/>
</dbReference>
<dbReference type="PANTHER" id="PTHR21091:SF169">
    <property type="entry name" value="UROPORPHYRINOGEN DECARBOXYLASE"/>
    <property type="match status" value="1"/>
</dbReference>
<dbReference type="Pfam" id="PF01208">
    <property type="entry name" value="URO-D"/>
    <property type="match status" value="1"/>
</dbReference>
<dbReference type="SUPFAM" id="SSF51726">
    <property type="entry name" value="UROD/MetE-like"/>
    <property type="match status" value="1"/>
</dbReference>
<dbReference type="PROSITE" id="PS00906">
    <property type="entry name" value="UROD_1"/>
    <property type="match status" value="1"/>
</dbReference>
<dbReference type="PROSITE" id="PS00907">
    <property type="entry name" value="UROD_2"/>
    <property type="match status" value="1"/>
</dbReference>
<protein>
    <recommendedName>
        <fullName evidence="1">Uroporphyrinogen decarboxylase</fullName>
        <shortName evidence="1">UPD</shortName>
        <shortName evidence="1">URO-D</shortName>
        <ecNumber evidence="1">4.1.1.37</ecNumber>
    </recommendedName>
</protein>
<feature type="chain" id="PRO_1000197533" description="Uroporphyrinogen decarboxylase">
    <location>
        <begin position="1"/>
        <end position="355"/>
    </location>
</feature>
<feature type="binding site" evidence="1">
    <location>
        <begin position="27"/>
        <end position="31"/>
    </location>
    <ligand>
        <name>substrate</name>
    </ligand>
</feature>
<feature type="binding site" evidence="1">
    <location>
        <position position="78"/>
    </location>
    <ligand>
        <name>substrate</name>
    </ligand>
</feature>
<feature type="binding site" evidence="1">
    <location>
        <position position="155"/>
    </location>
    <ligand>
        <name>substrate</name>
    </ligand>
</feature>
<feature type="binding site" evidence="1">
    <location>
        <position position="210"/>
    </location>
    <ligand>
        <name>substrate</name>
    </ligand>
</feature>
<feature type="binding site" evidence="1">
    <location>
        <position position="328"/>
    </location>
    <ligand>
        <name>substrate</name>
    </ligand>
</feature>
<feature type="site" description="Transition state stabilizer" evidence="1">
    <location>
        <position position="78"/>
    </location>
</feature>
<name>DCUP_PSEA8</name>
<organism>
    <name type="scientific">Pseudomonas aeruginosa (strain LESB58)</name>
    <dbReference type="NCBI Taxonomy" id="557722"/>
    <lineage>
        <taxon>Bacteria</taxon>
        <taxon>Pseudomonadati</taxon>
        <taxon>Pseudomonadota</taxon>
        <taxon>Gammaproteobacteria</taxon>
        <taxon>Pseudomonadales</taxon>
        <taxon>Pseudomonadaceae</taxon>
        <taxon>Pseudomonas</taxon>
    </lineage>
</organism>
<accession>B7V3C7</accession>
<comment type="function">
    <text evidence="1">Catalyzes the decarboxylation of four acetate groups of uroporphyrinogen-III to yield coproporphyrinogen-III.</text>
</comment>
<comment type="catalytic activity">
    <reaction evidence="1">
        <text>uroporphyrinogen III + 4 H(+) = coproporphyrinogen III + 4 CO2</text>
        <dbReference type="Rhea" id="RHEA:19865"/>
        <dbReference type="ChEBI" id="CHEBI:15378"/>
        <dbReference type="ChEBI" id="CHEBI:16526"/>
        <dbReference type="ChEBI" id="CHEBI:57308"/>
        <dbReference type="ChEBI" id="CHEBI:57309"/>
        <dbReference type="EC" id="4.1.1.37"/>
    </reaction>
</comment>
<comment type="pathway">
    <text evidence="1">Porphyrin-containing compound metabolism; protoporphyrin-IX biosynthesis; coproporphyrinogen-III from 5-aminolevulinate: step 4/4.</text>
</comment>
<comment type="subunit">
    <text evidence="1">Homodimer.</text>
</comment>
<comment type="subcellular location">
    <subcellularLocation>
        <location evidence="1">Cytoplasm</location>
    </subcellularLocation>
</comment>
<comment type="similarity">
    <text evidence="1">Belongs to the uroporphyrinogen decarboxylase family.</text>
</comment>
<gene>
    <name evidence="1" type="primary">hemE</name>
    <name type="ordered locus">PLES_54241</name>
</gene>